<reference key="1">
    <citation type="journal article" date="1986" name="Proc. Natl. Acad. Sci. U.S.A.">
        <title>Complete amino acid sequence of chicken cartilage link protein deduced from cDNA clones.</title>
        <authorList>
            <person name="Deak F."/>
            <person name="Kiss I."/>
            <person name="Sparks K.J."/>
            <person name="Argraves W.S."/>
            <person name="Hampikian G."/>
            <person name="Goetinck P.F."/>
        </authorList>
    </citation>
    <scope>NUCLEOTIDE SEQUENCE [MRNA]</scope>
    <source>
        <tissue>Embryonic sternal cartilage</tissue>
    </source>
</reference>
<reference key="2">
    <citation type="journal article" date="1987" name="Proc. Natl. Acad. Sci. U.S.A.">
        <title>Structure of the chicken link protein gene: exons correlate with the protein domains.</title>
        <authorList>
            <person name="Kiss I."/>
            <person name="Deak F."/>
            <person name="Mestric S."/>
            <person name="Delius H."/>
            <person name="Soos J."/>
            <person name="Dekany K."/>
            <person name="Argraves W.S."/>
            <person name="Sparks K.J."/>
            <person name="Goetinck P.F."/>
        </authorList>
    </citation>
    <scope>NUCLEOTIDE SEQUENCE [GENOMIC DNA]</scope>
</reference>
<reference key="3">
    <citation type="journal article" date="1991" name="J. Biol. Chem.">
        <title>Association between proteoglycans and matrix vesicles in the extracellular matrix of growth plate cartilage.</title>
        <authorList>
            <person name="Wu L.N."/>
            <person name="Genge B.R."/>
            <person name="Wuthier R.E."/>
        </authorList>
    </citation>
    <scope>GLYCOSYLATION AT ASN-56</scope>
</reference>
<comment type="function">
    <text>Stabilizes the aggregates of proteoglycan monomers with hyaluronic acid in the extracellular cartilage matrix.</text>
</comment>
<comment type="subcellular location">
    <subcellularLocation>
        <location>Secreted</location>
        <location>Extracellular space</location>
        <location>Extracellular matrix</location>
    </subcellularLocation>
</comment>
<comment type="similarity">
    <text evidence="5">Belongs to the HAPLN family.</text>
</comment>
<dbReference type="EMBL" id="M13212">
    <property type="protein sequence ID" value="AAA48940.1"/>
    <property type="molecule type" value="mRNA"/>
</dbReference>
<dbReference type="EMBL" id="M35038">
    <property type="protein sequence ID" value="AAA48941.1"/>
    <property type="molecule type" value="Genomic_DNA"/>
</dbReference>
<dbReference type="EMBL" id="M35035">
    <property type="protein sequence ID" value="AAA48941.1"/>
    <property type="status" value="JOINED"/>
    <property type="molecule type" value="Genomic_DNA"/>
</dbReference>
<dbReference type="EMBL" id="M35036">
    <property type="protein sequence ID" value="AAA48941.1"/>
    <property type="status" value="JOINED"/>
    <property type="molecule type" value="Genomic_DNA"/>
</dbReference>
<dbReference type="EMBL" id="M35037">
    <property type="protein sequence ID" value="AAA48941.1"/>
    <property type="status" value="JOINED"/>
    <property type="molecule type" value="Genomic_DNA"/>
</dbReference>
<dbReference type="PIR" id="A28305">
    <property type="entry name" value="LKCH"/>
</dbReference>
<dbReference type="RefSeq" id="NP_990813.1">
    <property type="nucleotide sequence ID" value="NM_205482.3"/>
</dbReference>
<dbReference type="RefSeq" id="XP_015136080.1">
    <property type="nucleotide sequence ID" value="XM_015280594.1"/>
</dbReference>
<dbReference type="RefSeq" id="XP_015136082.1">
    <property type="nucleotide sequence ID" value="XM_015280596.1"/>
</dbReference>
<dbReference type="RefSeq" id="XP_015136083.1">
    <property type="nucleotide sequence ID" value="XM_015280597.1"/>
</dbReference>
<dbReference type="RefSeq" id="XP_015136084.1">
    <property type="nucleotide sequence ID" value="XM_015280598.4"/>
</dbReference>
<dbReference type="RefSeq" id="XP_025000462.1">
    <property type="nucleotide sequence ID" value="XM_025144694.3"/>
</dbReference>
<dbReference type="RefSeq" id="XP_040511399.1">
    <property type="nucleotide sequence ID" value="XM_040655465.2"/>
</dbReference>
<dbReference type="RefSeq" id="XP_046761231.1">
    <property type="nucleotide sequence ID" value="XM_046905275.1"/>
</dbReference>
<dbReference type="RefSeq" id="XP_046790854.1">
    <property type="nucleotide sequence ID" value="XM_046934898.1"/>
</dbReference>
<dbReference type="RefSeq" id="XP_046790855.1">
    <property type="nucleotide sequence ID" value="XM_046934899.1"/>
</dbReference>
<dbReference type="RefSeq" id="XP_046790856.1">
    <property type="nucleotide sequence ID" value="XM_046934900.1"/>
</dbReference>
<dbReference type="RefSeq" id="XP_046790857.1">
    <property type="nucleotide sequence ID" value="XM_046934901.1"/>
</dbReference>
<dbReference type="SMR" id="P07354"/>
<dbReference type="FunCoup" id="P07354">
    <property type="interactions" value="47"/>
</dbReference>
<dbReference type="STRING" id="9031.ENSGALP00000072418"/>
<dbReference type="GlyCosmos" id="P07354">
    <property type="glycosylation" value="2 sites, No reported glycans"/>
</dbReference>
<dbReference type="GlyGen" id="P07354">
    <property type="glycosylation" value="2 sites"/>
</dbReference>
<dbReference type="iPTMnet" id="P07354"/>
<dbReference type="PaxDb" id="9031-ENSGALP00000041828"/>
<dbReference type="Ensembl" id="ENSGALT00010016066.1">
    <property type="protein sequence ID" value="ENSGALP00010009235.1"/>
    <property type="gene ID" value="ENSGALG00010006730.1"/>
</dbReference>
<dbReference type="GeneID" id="396475"/>
<dbReference type="KEGG" id="gga:396475"/>
<dbReference type="CTD" id="1404"/>
<dbReference type="VEuPathDB" id="HostDB:geneid_396475"/>
<dbReference type="eggNOG" id="ENOG502QRAR">
    <property type="taxonomic scope" value="Eukaryota"/>
</dbReference>
<dbReference type="GeneTree" id="ENSGT00940000159267"/>
<dbReference type="HOGENOM" id="CLU_052285_1_0_1"/>
<dbReference type="InParanoid" id="P07354"/>
<dbReference type="OMA" id="ERACHDQ"/>
<dbReference type="OrthoDB" id="5359219at2759"/>
<dbReference type="PhylomeDB" id="P07354"/>
<dbReference type="TreeFam" id="TF332134"/>
<dbReference type="Reactome" id="R-GGA-3000178">
    <property type="pathway name" value="ECM proteoglycans"/>
</dbReference>
<dbReference type="PRO" id="PR:P07354"/>
<dbReference type="Proteomes" id="UP000000539">
    <property type="component" value="Chromosome Z"/>
</dbReference>
<dbReference type="Bgee" id="ENSGALG00000015627">
    <property type="expression patterns" value="Expressed in testis and 6 other cell types or tissues"/>
</dbReference>
<dbReference type="GO" id="GO:0005615">
    <property type="term" value="C:extracellular space"/>
    <property type="evidence" value="ECO:0000318"/>
    <property type="project" value="GO_Central"/>
</dbReference>
<dbReference type="GO" id="GO:0072534">
    <property type="term" value="C:perineuronal net"/>
    <property type="evidence" value="ECO:0000318"/>
    <property type="project" value="GO_Central"/>
</dbReference>
<dbReference type="GO" id="GO:0045202">
    <property type="term" value="C:synapse"/>
    <property type="evidence" value="ECO:0000318"/>
    <property type="project" value="GO_Central"/>
</dbReference>
<dbReference type="GO" id="GO:0005540">
    <property type="term" value="F:hyaluronic acid binding"/>
    <property type="evidence" value="ECO:0007669"/>
    <property type="project" value="UniProtKB-KW"/>
</dbReference>
<dbReference type="GO" id="GO:0007155">
    <property type="term" value="P:cell adhesion"/>
    <property type="evidence" value="ECO:0007669"/>
    <property type="project" value="InterPro"/>
</dbReference>
<dbReference type="GO" id="GO:0007417">
    <property type="term" value="P:central nervous system development"/>
    <property type="evidence" value="ECO:0000318"/>
    <property type="project" value="GO_Central"/>
</dbReference>
<dbReference type="GO" id="GO:0001501">
    <property type="term" value="P:skeletal system development"/>
    <property type="evidence" value="ECO:0000318"/>
    <property type="project" value="GO_Central"/>
</dbReference>
<dbReference type="CDD" id="cd05877">
    <property type="entry name" value="Ig_LP_like"/>
    <property type="match status" value="1"/>
</dbReference>
<dbReference type="CDD" id="cd03518">
    <property type="entry name" value="Link_domain_HAPLN_module_1"/>
    <property type="match status" value="1"/>
</dbReference>
<dbReference type="CDD" id="cd03519">
    <property type="entry name" value="Link_domain_HAPLN_module_2"/>
    <property type="match status" value="1"/>
</dbReference>
<dbReference type="FunFam" id="2.60.40.10:FF:000631">
    <property type="entry name" value="Hyaluronan and proteoglycan link protein 1"/>
    <property type="match status" value="1"/>
</dbReference>
<dbReference type="FunFam" id="3.10.100.10:FF:000001">
    <property type="entry name" value="Hyaluronan proteoglycan link protein 1"/>
    <property type="match status" value="1"/>
</dbReference>
<dbReference type="FunFam" id="3.10.100.10:FF:000002">
    <property type="entry name" value="Hyaluronan proteoglycan link protein 1"/>
    <property type="match status" value="1"/>
</dbReference>
<dbReference type="Gene3D" id="2.60.40.10">
    <property type="entry name" value="Immunoglobulins"/>
    <property type="match status" value="1"/>
</dbReference>
<dbReference type="Gene3D" id="3.10.100.10">
    <property type="entry name" value="Mannose-Binding Protein A, subunit A"/>
    <property type="match status" value="2"/>
</dbReference>
<dbReference type="InterPro" id="IPR016186">
    <property type="entry name" value="C-type_lectin-like/link_sf"/>
</dbReference>
<dbReference type="InterPro" id="IPR016187">
    <property type="entry name" value="CTDL_fold"/>
</dbReference>
<dbReference type="InterPro" id="IPR050691">
    <property type="entry name" value="Hyaluronan_bind_Proteoglycan"/>
</dbReference>
<dbReference type="InterPro" id="IPR007110">
    <property type="entry name" value="Ig-like_dom"/>
</dbReference>
<dbReference type="InterPro" id="IPR036179">
    <property type="entry name" value="Ig-like_dom_sf"/>
</dbReference>
<dbReference type="InterPro" id="IPR013783">
    <property type="entry name" value="Ig-like_fold"/>
</dbReference>
<dbReference type="InterPro" id="IPR003599">
    <property type="entry name" value="Ig_sub"/>
</dbReference>
<dbReference type="InterPro" id="IPR013106">
    <property type="entry name" value="Ig_V-set"/>
</dbReference>
<dbReference type="InterPro" id="IPR000538">
    <property type="entry name" value="Link_dom"/>
</dbReference>
<dbReference type="PANTHER" id="PTHR22804">
    <property type="entry name" value="AGGRECAN/VERSICAN PROTEOGLYCAN"/>
    <property type="match status" value="1"/>
</dbReference>
<dbReference type="PANTHER" id="PTHR22804:SF10">
    <property type="entry name" value="HYALURONAN AND PROTEOGLYCAN LINK PROTEIN 1"/>
    <property type="match status" value="1"/>
</dbReference>
<dbReference type="Pfam" id="PF07686">
    <property type="entry name" value="V-set"/>
    <property type="match status" value="1"/>
</dbReference>
<dbReference type="Pfam" id="PF00193">
    <property type="entry name" value="Xlink"/>
    <property type="match status" value="2"/>
</dbReference>
<dbReference type="PRINTS" id="PR01265">
    <property type="entry name" value="LINKMODULE"/>
</dbReference>
<dbReference type="SMART" id="SM00409">
    <property type="entry name" value="IG"/>
    <property type="match status" value="1"/>
</dbReference>
<dbReference type="SMART" id="SM00406">
    <property type="entry name" value="IGv"/>
    <property type="match status" value="1"/>
</dbReference>
<dbReference type="SMART" id="SM00445">
    <property type="entry name" value="LINK"/>
    <property type="match status" value="2"/>
</dbReference>
<dbReference type="SUPFAM" id="SSF56436">
    <property type="entry name" value="C-type lectin-like"/>
    <property type="match status" value="2"/>
</dbReference>
<dbReference type="SUPFAM" id="SSF48726">
    <property type="entry name" value="Immunoglobulin"/>
    <property type="match status" value="1"/>
</dbReference>
<dbReference type="PROSITE" id="PS50835">
    <property type="entry name" value="IG_LIKE"/>
    <property type="match status" value="1"/>
</dbReference>
<dbReference type="PROSITE" id="PS01241">
    <property type="entry name" value="LINK_1"/>
    <property type="match status" value="2"/>
</dbReference>
<dbReference type="PROSITE" id="PS50963">
    <property type="entry name" value="LINK_2"/>
    <property type="match status" value="2"/>
</dbReference>
<organism>
    <name type="scientific">Gallus gallus</name>
    <name type="common">Chicken</name>
    <dbReference type="NCBI Taxonomy" id="9031"/>
    <lineage>
        <taxon>Eukaryota</taxon>
        <taxon>Metazoa</taxon>
        <taxon>Chordata</taxon>
        <taxon>Craniata</taxon>
        <taxon>Vertebrata</taxon>
        <taxon>Euteleostomi</taxon>
        <taxon>Archelosauria</taxon>
        <taxon>Archosauria</taxon>
        <taxon>Dinosauria</taxon>
        <taxon>Saurischia</taxon>
        <taxon>Theropoda</taxon>
        <taxon>Coelurosauria</taxon>
        <taxon>Aves</taxon>
        <taxon>Neognathae</taxon>
        <taxon>Galloanserae</taxon>
        <taxon>Galliformes</taxon>
        <taxon>Phasianidae</taxon>
        <taxon>Phasianinae</taxon>
        <taxon>Gallus</taxon>
    </lineage>
</organism>
<evidence type="ECO:0000250" key="1"/>
<evidence type="ECO:0000255" key="2"/>
<evidence type="ECO:0000255" key="3">
    <source>
        <dbReference type="PROSITE-ProRule" id="PRU00323"/>
    </source>
</evidence>
<evidence type="ECO:0000269" key="4">
    <source>
    </source>
</evidence>
<evidence type="ECO:0000305" key="5"/>
<feature type="propeptide" id="PRO_0000013185">
    <location>
        <begin position="1"/>
        <end position="9"/>
    </location>
</feature>
<feature type="chain" id="PRO_0000013186" description="Hyaluronan and proteoglycan link protein 1">
    <location>
        <begin position="10"/>
        <end position="355"/>
    </location>
</feature>
<feature type="domain" description="Ig-like V-type">
    <location>
        <begin position="38"/>
        <end position="156"/>
    </location>
</feature>
<feature type="domain" description="Link 1" evidence="3">
    <location>
        <begin position="160"/>
        <end position="255"/>
    </location>
</feature>
<feature type="domain" description="Link 2" evidence="3">
    <location>
        <begin position="260"/>
        <end position="352"/>
    </location>
</feature>
<feature type="glycosylation site" description="N-linked (GlcNAc...) asparagine" evidence="2">
    <location>
        <position position="21"/>
    </location>
</feature>
<feature type="glycosylation site" description="N-linked (GlcNAc...) asparagine" evidence="4">
    <location>
        <position position="56"/>
    </location>
</feature>
<feature type="disulfide bond" evidence="1">
    <location>
        <begin position="61"/>
        <end position="140"/>
    </location>
</feature>
<feature type="disulfide bond" evidence="1">
    <location>
        <begin position="182"/>
        <end position="253"/>
    </location>
</feature>
<feature type="disulfide bond" evidence="1">
    <location>
        <begin position="206"/>
        <end position="227"/>
    </location>
</feature>
<feature type="disulfide bond" evidence="1">
    <location>
        <begin position="280"/>
        <end position="350"/>
    </location>
</feature>
<feature type="disulfide bond" evidence="1">
    <location>
        <begin position="305"/>
        <end position="326"/>
    </location>
</feature>
<keyword id="KW-1015">Disulfide bond</keyword>
<keyword id="KW-0272">Extracellular matrix</keyword>
<keyword id="KW-0325">Glycoprotein</keyword>
<keyword id="KW-0373">Hyaluronic acid</keyword>
<keyword id="KW-0393">Immunoglobulin domain</keyword>
<keyword id="KW-1185">Reference proteome</keyword>
<keyword id="KW-0677">Repeat</keyword>
<keyword id="KW-0964">Secreted</keyword>
<accession>P07354</accession>
<gene>
    <name type="primary">HAPLN1</name>
    <name type="synonym">CRTL1</name>
</gene>
<name>HPLN1_CHICK</name>
<sequence length="355" mass="40533">MTSLLFLVLISVCWAEPHPDNSSLEHERIIHIQEENGPRLLVVAEQAKIFSQRGGNVTLPCKFYHEHTSTAGSGTHKIRVKWTKLTSDYLKEVDVFVAMGHHRKSYGKYQGRVFLRESSENDASLIITNIMLEDYGRYKCEVIEGLEDDTAVVALNLEGVVFPYSPRLGRYNLNFHEAQQACLDQDSIIASFDQLYEAWRSGLDWCNAGWLSDGSVQYPITKPREPCGGKNTVPGVRNYGFWDKERSRYDVFCFTSNFNGRFYYLIHPTKLTYDEAVQACLKDGAQIAKVGQIFAAWKLLGYDRCDAGWLADGSVRYPISRPRKRCSPNEAAVRFVGFPDKKHKLYGVYCFRAYN</sequence>
<proteinExistence type="evidence at protein level"/>
<protein>
    <recommendedName>
        <fullName>Hyaluronan and proteoglycan link protein 1</fullName>
    </recommendedName>
    <alternativeName>
        <fullName>Cartilage-linking protein 1</fullName>
        <shortName>Cartilage-link protein</shortName>
    </alternativeName>
    <alternativeName>
        <fullName>Proteoglycan link protein</fullName>
    </alternativeName>
</protein>